<name>NOB1_RAT</name>
<comment type="function">
    <text evidence="2 3">May play a role in mRNA degradation (By similarity). Endonuclease required for processing of 20S pre-rRNA precursor and biogenesis of 40S ribosomal subunits (By similarity).</text>
</comment>
<comment type="subunit">
    <text evidence="2 3">May interact with UPF2 (By similarity). Component of the small ribosomal subunit, ribosomal RNA processing complex (SSU RRP complex) (By similarity).</text>
</comment>
<comment type="subcellular location">
    <subcellularLocation>
        <location evidence="3">Nucleus</location>
    </subcellularLocation>
</comment>
<comment type="similarity">
    <text evidence="6">Belongs to the NOB1 family.</text>
</comment>
<proteinExistence type="evidence at transcript level"/>
<gene>
    <name type="primary">Nob1</name>
    <name type="synonym">Nob1p</name>
</gene>
<dbReference type="EC" id="3.1.-.-" evidence="2"/>
<dbReference type="EMBL" id="AY341886">
    <property type="protein sequence ID" value="AAQ24170.1"/>
    <property type="molecule type" value="mRNA"/>
</dbReference>
<dbReference type="EMBL" id="BC126076">
    <property type="protein sequence ID" value="AAI26077.1"/>
    <property type="molecule type" value="mRNA"/>
</dbReference>
<dbReference type="RefSeq" id="NP_954517.1">
    <property type="nucleotide sequence ID" value="NM_199086.1"/>
</dbReference>
<dbReference type="SMR" id="Q6VEU1"/>
<dbReference type="FunCoup" id="Q6VEU1">
    <property type="interactions" value="3552"/>
</dbReference>
<dbReference type="STRING" id="10116.ENSRNOP00000031905"/>
<dbReference type="PhosphoSitePlus" id="Q6VEU1"/>
<dbReference type="jPOST" id="Q6VEU1"/>
<dbReference type="PaxDb" id="10116-ENSRNOP00000031905"/>
<dbReference type="GeneID" id="291996"/>
<dbReference type="KEGG" id="rno:291996"/>
<dbReference type="UCSC" id="RGD:735222">
    <property type="organism name" value="rat"/>
</dbReference>
<dbReference type="AGR" id="RGD:735222"/>
<dbReference type="CTD" id="28987"/>
<dbReference type="RGD" id="735222">
    <property type="gene designation" value="Nob1"/>
</dbReference>
<dbReference type="VEuPathDB" id="HostDB:ENSRNOG00000021890"/>
<dbReference type="eggNOG" id="KOG2463">
    <property type="taxonomic scope" value="Eukaryota"/>
</dbReference>
<dbReference type="HOGENOM" id="CLU_024666_0_0_1"/>
<dbReference type="InParanoid" id="Q6VEU1"/>
<dbReference type="OrthoDB" id="46581at9989"/>
<dbReference type="PhylomeDB" id="Q6VEU1"/>
<dbReference type="TreeFam" id="TF105838"/>
<dbReference type="Reactome" id="R-RNO-6791226">
    <property type="pathway name" value="Major pathway of rRNA processing in the nucleolus and cytosol"/>
</dbReference>
<dbReference type="PRO" id="PR:Q6VEU1"/>
<dbReference type="Proteomes" id="UP000002494">
    <property type="component" value="Chromosome 19"/>
</dbReference>
<dbReference type="Bgee" id="ENSRNOG00000021890">
    <property type="expression patterns" value="Expressed in pancreas and 20 other cell types or tissues"/>
</dbReference>
<dbReference type="GO" id="GO:0005634">
    <property type="term" value="C:nucleus"/>
    <property type="evidence" value="ECO:0007669"/>
    <property type="project" value="UniProtKB-SubCell"/>
</dbReference>
<dbReference type="GO" id="GO:0030688">
    <property type="term" value="C:preribosome, small subunit precursor"/>
    <property type="evidence" value="ECO:0000318"/>
    <property type="project" value="GO_Central"/>
</dbReference>
<dbReference type="GO" id="GO:0004521">
    <property type="term" value="F:RNA endonuclease activity"/>
    <property type="evidence" value="ECO:0000266"/>
    <property type="project" value="RGD"/>
</dbReference>
<dbReference type="GO" id="GO:0008270">
    <property type="term" value="F:zinc ion binding"/>
    <property type="evidence" value="ECO:0007669"/>
    <property type="project" value="UniProtKB-KW"/>
</dbReference>
<dbReference type="GO" id="GO:0030490">
    <property type="term" value="P:maturation of SSU-rRNA"/>
    <property type="evidence" value="ECO:0000318"/>
    <property type="project" value="GO_Central"/>
</dbReference>
<dbReference type="GO" id="GO:0007601">
    <property type="term" value="P:visual perception"/>
    <property type="evidence" value="ECO:0000266"/>
    <property type="project" value="RGD"/>
</dbReference>
<dbReference type="CDD" id="cd09876">
    <property type="entry name" value="PIN_Nob1-like"/>
    <property type="match status" value="1"/>
</dbReference>
<dbReference type="FunFam" id="3.40.50.1010:FF:000018">
    <property type="entry name" value="RNA-binding protein NOB1"/>
    <property type="match status" value="1"/>
</dbReference>
<dbReference type="Gene3D" id="3.40.50.1010">
    <property type="entry name" value="5'-nuclease"/>
    <property type="match status" value="1"/>
</dbReference>
<dbReference type="Gene3D" id="6.20.210.10">
    <property type="entry name" value="Nin one binding (NOB1), Zn-ribbon-like"/>
    <property type="match status" value="1"/>
</dbReference>
<dbReference type="InterPro" id="IPR039907">
    <property type="entry name" value="NOB1"/>
</dbReference>
<dbReference type="InterPro" id="IPR017117">
    <property type="entry name" value="Nob1_euk"/>
</dbReference>
<dbReference type="InterPro" id="IPR036283">
    <property type="entry name" value="NOB1_Zf-like_sf"/>
</dbReference>
<dbReference type="InterPro" id="IPR014881">
    <property type="entry name" value="NOB1_Zn-bd"/>
</dbReference>
<dbReference type="InterPro" id="IPR002716">
    <property type="entry name" value="PIN_dom"/>
</dbReference>
<dbReference type="InterPro" id="IPR033411">
    <property type="entry name" value="Ribonuclease_PIN"/>
</dbReference>
<dbReference type="InterPro" id="IPR033461">
    <property type="entry name" value="WRNPLPNID"/>
</dbReference>
<dbReference type="PANTHER" id="PTHR12814">
    <property type="entry name" value="RNA-BINDING PROTEIN NOB1"/>
    <property type="match status" value="1"/>
</dbReference>
<dbReference type="PANTHER" id="PTHR12814:SF2">
    <property type="entry name" value="RNA-BINDING PROTEIN NOB1"/>
    <property type="match status" value="1"/>
</dbReference>
<dbReference type="Pfam" id="PF17146">
    <property type="entry name" value="PIN_6"/>
    <property type="match status" value="1"/>
</dbReference>
<dbReference type="Pfam" id="PF15017">
    <property type="entry name" value="WRNPLPNID"/>
    <property type="match status" value="1"/>
</dbReference>
<dbReference type="Pfam" id="PF08772">
    <property type="entry name" value="Zn_ribbon_NOB1"/>
    <property type="match status" value="1"/>
</dbReference>
<dbReference type="PIRSF" id="PIRSF037125">
    <property type="entry name" value="D-site_20S_pre-rRNA_nuclease"/>
    <property type="match status" value="1"/>
</dbReference>
<dbReference type="SMART" id="SM00670">
    <property type="entry name" value="PINc"/>
    <property type="match status" value="1"/>
</dbReference>
<dbReference type="SUPFAM" id="SSF144206">
    <property type="entry name" value="NOB1 zinc finger-like"/>
    <property type="match status" value="1"/>
</dbReference>
<keyword id="KW-0255">Endonuclease</keyword>
<keyword id="KW-0378">Hydrolase</keyword>
<keyword id="KW-0479">Metal-binding</keyword>
<keyword id="KW-0540">Nuclease</keyword>
<keyword id="KW-0539">Nucleus</keyword>
<keyword id="KW-0597">Phosphoprotein</keyword>
<keyword id="KW-1185">Reference proteome</keyword>
<keyword id="KW-0862">Zinc</keyword>
<keyword id="KW-0863">Zinc-finger</keyword>
<evidence type="ECO:0000250" key="1">
    <source>
        <dbReference type="UniProtKB" id="Q8BW10"/>
    </source>
</evidence>
<evidence type="ECO:0000250" key="2">
    <source>
        <dbReference type="UniProtKB" id="Q9FLL1"/>
    </source>
</evidence>
<evidence type="ECO:0000250" key="3">
    <source>
        <dbReference type="UniProtKB" id="Q9ULX3"/>
    </source>
</evidence>
<evidence type="ECO:0000255" key="4"/>
<evidence type="ECO:0000256" key="5">
    <source>
        <dbReference type="SAM" id="MobiDB-lite"/>
    </source>
</evidence>
<evidence type="ECO:0000305" key="6"/>
<feature type="chain" id="PRO_0000233269" description="RNA-binding protein NOB1">
    <location>
        <begin position="1"/>
        <end position="410"/>
    </location>
</feature>
<feature type="domain" description="PINc" evidence="4">
    <location>
        <begin position="5"/>
        <end position="108"/>
    </location>
</feature>
<feature type="zinc finger region" description="NOB1" evidence="4">
    <location>
        <begin position="258"/>
        <end position="330"/>
    </location>
</feature>
<feature type="region of interest" description="Disordered" evidence="5">
    <location>
        <begin position="180"/>
        <end position="210"/>
    </location>
</feature>
<feature type="compositionally biased region" description="Acidic residues" evidence="5">
    <location>
        <begin position="180"/>
        <end position="203"/>
    </location>
</feature>
<feature type="binding site" evidence="1">
    <location>
        <position position="268"/>
    </location>
    <ligand>
        <name>Zn(2+)</name>
        <dbReference type="ChEBI" id="CHEBI:29105"/>
    </ligand>
</feature>
<feature type="binding site" evidence="1">
    <location>
        <position position="271"/>
    </location>
    <ligand>
        <name>Zn(2+)</name>
        <dbReference type="ChEBI" id="CHEBI:29105"/>
    </ligand>
</feature>
<feature type="binding site" evidence="1">
    <location>
        <position position="283"/>
    </location>
    <ligand>
        <name>Zn(2+)</name>
        <dbReference type="ChEBI" id="CHEBI:29105"/>
    </ligand>
</feature>
<feature type="binding site" evidence="1">
    <location>
        <position position="286"/>
    </location>
    <ligand>
        <name>Zn(2+)</name>
        <dbReference type="ChEBI" id="CHEBI:29105"/>
    </ligand>
</feature>
<feature type="modified residue" description="Phosphoserine" evidence="3">
    <location>
        <position position="199"/>
    </location>
</feature>
<feature type="modified residue" description="Phosphoserine" evidence="3">
    <location>
        <position position="323"/>
    </location>
</feature>
<feature type="modified residue" description="Phosphoserine" evidence="3">
    <location>
        <position position="350"/>
    </location>
</feature>
<sequence length="410" mass="46425">MAPVEHVVADAGAFLRDAPLQDIGKNIYTIREVVREIRDKATRRRLAVLPYELRFKEPFPEYVRLVTEFSKKTGDYPSLSATDIQVLALTYQLEAEFVGVSHLKKEPEKVKVSSSIQHPETPLHISGFHLPSKSKALQETVDHGPPADGSENLEFSSFMFWRNPLPNIDHELQQLLIDGREEEEEEEEEEEEEDELEDSDDDGGGWITPSNIKQIQHESEQCDIPKDVQVGCVTTDFAMQNVLLQMGLHVLAVNGMLVREARSYILRCHGCFKTTSDMNRVFCGHCGNKTLKKVSVTINDDGTLHMHFSRNPKVLNPRGLRYSLPTPKGGKYAVNPHLTEDQRFPQLRLSHKARQKTNVFAPDYIAGVSPFAENDISSRSAILQVRDSMLGAGRRRLNPNASRKKFVKKR</sequence>
<organism>
    <name type="scientific">Rattus norvegicus</name>
    <name type="common">Rat</name>
    <dbReference type="NCBI Taxonomy" id="10116"/>
    <lineage>
        <taxon>Eukaryota</taxon>
        <taxon>Metazoa</taxon>
        <taxon>Chordata</taxon>
        <taxon>Craniata</taxon>
        <taxon>Vertebrata</taxon>
        <taxon>Euteleostomi</taxon>
        <taxon>Mammalia</taxon>
        <taxon>Eutheria</taxon>
        <taxon>Euarchontoglires</taxon>
        <taxon>Glires</taxon>
        <taxon>Rodentia</taxon>
        <taxon>Myomorpha</taxon>
        <taxon>Muroidea</taxon>
        <taxon>Muridae</taxon>
        <taxon>Murinae</taxon>
        <taxon>Rattus</taxon>
    </lineage>
</organism>
<reference key="1">
    <citation type="submission" date="2003-07" db="EMBL/GenBank/DDBJ databases">
        <title>Mammalian NOB1 interact with Nob1p.</title>
        <authorList>
            <person name="Zhou G."/>
            <person name="Zhang Y."/>
            <person name="Ni J."/>
        </authorList>
    </citation>
    <scope>NUCLEOTIDE SEQUENCE [MRNA]</scope>
    <source>
        <strain>Sprague-Dawley</strain>
    </source>
</reference>
<reference key="2">
    <citation type="journal article" date="2004" name="Genome Res.">
        <title>The status, quality, and expansion of the NIH full-length cDNA project: the Mammalian Gene Collection (MGC).</title>
        <authorList>
            <consortium name="The MGC Project Team"/>
        </authorList>
    </citation>
    <scope>NUCLEOTIDE SEQUENCE [LARGE SCALE MRNA]</scope>
    <source>
        <tissue>Brain</tissue>
    </source>
</reference>
<accession>Q6VEU1</accession>
<accession>A0JN09</accession>
<protein>
    <recommendedName>
        <fullName>RNA-binding protein NOB1</fullName>
        <ecNumber evidence="2">3.1.-.-</ecNumber>
    </recommendedName>
</protein>